<keyword id="KW-0028">Amino-acid biosynthesis</keyword>
<keyword id="KW-0057">Aromatic amino acid biosynthesis</keyword>
<keyword id="KW-0073">Auxin biosynthesis</keyword>
<keyword id="KW-0927">Auxin signaling pathway</keyword>
<keyword id="KW-0961">Cell wall biogenesis/degradation</keyword>
<keyword id="KW-0472">Membrane</keyword>
<keyword id="KW-0597">Phosphoprotein</keyword>
<keyword id="KW-0611">Plant defense</keyword>
<keyword id="KW-1185">Reference proteome</keyword>
<keyword id="KW-0677">Repeat</keyword>
<keyword id="KW-0812">Transmembrane</keyword>
<keyword id="KW-1133">Transmembrane helix</keyword>
<keyword id="KW-0822">Tryptophan biosynthesis</keyword>
<keyword id="KW-0926">Vacuole</keyword>
<dbReference type="EMBL" id="AC006434">
    <property type="protein sequence ID" value="AAF87121.1"/>
    <property type="status" value="ALT_SEQ"/>
    <property type="molecule type" value="Genomic_DNA"/>
</dbReference>
<dbReference type="EMBL" id="AC023754">
    <property type="status" value="NOT_ANNOTATED_CDS"/>
    <property type="molecule type" value="Genomic_DNA"/>
</dbReference>
<dbReference type="EMBL" id="CP002684">
    <property type="protein sequence ID" value="AEE35726.1"/>
    <property type="molecule type" value="Genomic_DNA"/>
</dbReference>
<dbReference type="EMBL" id="CP002684">
    <property type="protein sequence ID" value="AEE35727.1"/>
    <property type="molecule type" value="Genomic_DNA"/>
</dbReference>
<dbReference type="EMBL" id="AY045896">
    <property type="protein sequence ID" value="AAK76570.1"/>
    <property type="molecule type" value="mRNA"/>
</dbReference>
<dbReference type="EMBL" id="AY091450">
    <property type="protein sequence ID" value="AAM14389.1"/>
    <property type="molecule type" value="mRNA"/>
</dbReference>
<dbReference type="EMBL" id="BT000668">
    <property type="protein sequence ID" value="AAN31815.1"/>
    <property type="molecule type" value="mRNA"/>
</dbReference>
<dbReference type="EMBL" id="AK226453">
    <property type="protein sequence ID" value="BAE98595.1"/>
    <property type="molecule type" value="mRNA"/>
</dbReference>
<dbReference type="EMBL" id="AK229900">
    <property type="protein sequence ID" value="BAF01728.1"/>
    <property type="molecule type" value="mRNA"/>
</dbReference>
<dbReference type="PIR" id="E96785">
    <property type="entry name" value="E96785"/>
</dbReference>
<dbReference type="RefSeq" id="NP_001185403.1">
    <property type="nucleotide sequence ID" value="NM_001198474.1"/>
</dbReference>
<dbReference type="RefSeq" id="NP_565111.1">
    <property type="nucleotide sequence ID" value="NM_106203.6"/>
</dbReference>
<dbReference type="SMR" id="Q94AP3"/>
<dbReference type="BioGRID" id="29105">
    <property type="interactions" value="24"/>
</dbReference>
<dbReference type="FunCoup" id="Q94AP3">
    <property type="interactions" value="42"/>
</dbReference>
<dbReference type="IntAct" id="Q94AP3">
    <property type="interactions" value="24"/>
</dbReference>
<dbReference type="STRING" id="3702.Q94AP3"/>
<dbReference type="iPTMnet" id="Q94AP3"/>
<dbReference type="PaxDb" id="3702-AT1G75500.1"/>
<dbReference type="ProteomicsDB" id="242690"/>
<dbReference type="EnsemblPlants" id="AT1G75500.1">
    <property type="protein sequence ID" value="AT1G75500.1"/>
    <property type="gene ID" value="AT1G75500"/>
</dbReference>
<dbReference type="EnsemblPlants" id="AT1G75500.2">
    <property type="protein sequence ID" value="AT1G75500.2"/>
    <property type="gene ID" value="AT1G75500"/>
</dbReference>
<dbReference type="GeneID" id="843886"/>
<dbReference type="Gramene" id="AT1G75500.1">
    <property type="protein sequence ID" value="AT1G75500.1"/>
    <property type="gene ID" value="AT1G75500"/>
</dbReference>
<dbReference type="Gramene" id="AT1G75500.2">
    <property type="protein sequence ID" value="AT1G75500.2"/>
    <property type="gene ID" value="AT1G75500"/>
</dbReference>
<dbReference type="KEGG" id="ath:AT1G75500"/>
<dbReference type="Araport" id="AT1G75500"/>
<dbReference type="TAIR" id="AT1G75500">
    <property type="gene designation" value="WAT1"/>
</dbReference>
<dbReference type="eggNOG" id="ENOG502QSV3">
    <property type="taxonomic scope" value="Eukaryota"/>
</dbReference>
<dbReference type="HOGENOM" id="CLU_025359_1_2_1"/>
<dbReference type="InParanoid" id="Q94AP3"/>
<dbReference type="OMA" id="NIMQRCN"/>
<dbReference type="OrthoDB" id="1728340at2759"/>
<dbReference type="PhylomeDB" id="Q94AP3"/>
<dbReference type="PRO" id="PR:Q94AP3"/>
<dbReference type="Proteomes" id="UP000006548">
    <property type="component" value="Chromosome 1"/>
</dbReference>
<dbReference type="ExpressionAtlas" id="Q94AP3">
    <property type="expression patterns" value="baseline and differential"/>
</dbReference>
<dbReference type="GO" id="GO:0000325">
    <property type="term" value="C:plant-type vacuole"/>
    <property type="evidence" value="ECO:0007005"/>
    <property type="project" value="TAIR"/>
</dbReference>
<dbReference type="GO" id="GO:0009705">
    <property type="term" value="C:plant-type vacuole membrane"/>
    <property type="evidence" value="ECO:0000314"/>
    <property type="project" value="TAIR"/>
</dbReference>
<dbReference type="GO" id="GO:0005886">
    <property type="term" value="C:plasma membrane"/>
    <property type="evidence" value="ECO:0007005"/>
    <property type="project" value="TAIR"/>
</dbReference>
<dbReference type="GO" id="GO:0022857">
    <property type="term" value="F:transmembrane transporter activity"/>
    <property type="evidence" value="ECO:0007669"/>
    <property type="project" value="InterPro"/>
</dbReference>
<dbReference type="GO" id="GO:0009851">
    <property type="term" value="P:auxin biosynthetic process"/>
    <property type="evidence" value="ECO:0007669"/>
    <property type="project" value="UniProtKB-KW"/>
</dbReference>
<dbReference type="GO" id="GO:0010315">
    <property type="term" value="P:auxin export across the plasma membrane"/>
    <property type="evidence" value="ECO:0000315"/>
    <property type="project" value="CACAO"/>
</dbReference>
<dbReference type="GO" id="GO:0009734">
    <property type="term" value="P:auxin-activated signaling pathway"/>
    <property type="evidence" value="ECO:0007669"/>
    <property type="project" value="UniProtKB-KW"/>
</dbReference>
<dbReference type="GO" id="GO:0071555">
    <property type="term" value="P:cell wall organization"/>
    <property type="evidence" value="ECO:0007669"/>
    <property type="project" value="UniProtKB-KW"/>
</dbReference>
<dbReference type="GO" id="GO:0006952">
    <property type="term" value="P:defense response"/>
    <property type="evidence" value="ECO:0007669"/>
    <property type="project" value="UniProtKB-KW"/>
</dbReference>
<dbReference type="GO" id="GO:0000162">
    <property type="term" value="P:L-tryptophan biosynthetic process"/>
    <property type="evidence" value="ECO:0007669"/>
    <property type="project" value="UniProtKB-KW"/>
</dbReference>
<dbReference type="GO" id="GO:0009834">
    <property type="term" value="P:plant-type secondary cell wall biogenesis"/>
    <property type="evidence" value="ECO:0000315"/>
    <property type="project" value="TAIR"/>
</dbReference>
<dbReference type="GO" id="GO:0090355">
    <property type="term" value="P:positive regulation of auxin metabolic process"/>
    <property type="evidence" value="ECO:0000315"/>
    <property type="project" value="TAIR"/>
</dbReference>
<dbReference type="GO" id="GO:0090358">
    <property type="term" value="P:positive regulation of L-tryptophan metabolic process"/>
    <property type="evidence" value="ECO:0000315"/>
    <property type="project" value="TAIR"/>
</dbReference>
<dbReference type="GO" id="GO:0009826">
    <property type="term" value="P:unidimensional cell growth"/>
    <property type="evidence" value="ECO:0000315"/>
    <property type="project" value="TAIR"/>
</dbReference>
<dbReference type="InterPro" id="IPR000620">
    <property type="entry name" value="EamA_dom"/>
</dbReference>
<dbReference type="InterPro" id="IPR030184">
    <property type="entry name" value="WAT1-related"/>
</dbReference>
<dbReference type="PANTHER" id="PTHR31218">
    <property type="entry name" value="WAT1-RELATED PROTEIN"/>
    <property type="match status" value="1"/>
</dbReference>
<dbReference type="Pfam" id="PF00892">
    <property type="entry name" value="EamA"/>
    <property type="match status" value="2"/>
</dbReference>
<dbReference type="SUPFAM" id="SSF103481">
    <property type="entry name" value="Multidrug resistance efflux transporter EmrE"/>
    <property type="match status" value="2"/>
</dbReference>
<evidence type="ECO:0000255" key="1"/>
<evidence type="ECO:0000269" key="2">
    <source>
    </source>
</evidence>
<evidence type="ECO:0000269" key="3">
    <source>
    </source>
</evidence>
<evidence type="ECO:0000269" key="4">
    <source>
    </source>
</evidence>
<evidence type="ECO:0000269" key="5">
    <source>
    </source>
</evidence>
<evidence type="ECO:0000305" key="6"/>
<evidence type="ECO:0007744" key="7">
    <source>
    </source>
</evidence>
<protein>
    <recommendedName>
        <fullName>Protein WALLS ARE THIN 1</fullName>
    </recommendedName>
</protein>
<gene>
    <name type="primary">WAT1</name>
    <name type="ordered locus">At1g75500</name>
    <name type="ORF">F10A5.28</name>
    <name type="ORF">F1B16.19</name>
</gene>
<organism>
    <name type="scientific">Arabidopsis thaliana</name>
    <name type="common">Mouse-ear cress</name>
    <dbReference type="NCBI Taxonomy" id="3702"/>
    <lineage>
        <taxon>Eukaryota</taxon>
        <taxon>Viridiplantae</taxon>
        <taxon>Streptophyta</taxon>
        <taxon>Embryophyta</taxon>
        <taxon>Tracheophyta</taxon>
        <taxon>Spermatophyta</taxon>
        <taxon>Magnoliopsida</taxon>
        <taxon>eudicotyledons</taxon>
        <taxon>Gunneridae</taxon>
        <taxon>Pentapetalae</taxon>
        <taxon>rosids</taxon>
        <taxon>malvids</taxon>
        <taxon>Brassicales</taxon>
        <taxon>Brassicaceae</taxon>
        <taxon>Camelineae</taxon>
        <taxon>Arabidopsis</taxon>
    </lineage>
</organism>
<sequence length="389" mass="42571">MADNTDNRRSLWGVPEKLQLHIAMLTLQFGYAGFHVVSRAALNMGISKLVFPVYRNIIALLLLLPFAYFLEKKERPAITLNFLIQFFFLALIGITANQGFYLLGLDNTSPTFASSMQNSVPAITFLMAALLRIEKVRINRRDGISKILGTALCVAGASVITLYKGPTIYTPASHLHAHLLTTNSAVLAPLGNAAPKNWTLGCIYLIGHCLSWSGWLVFQAPVLKSYPARLSVTSYTCFFGIIQFLIIAAFCERDSQAWVFHSGWELFTILYAGIVASGIAFAVQIWCIDRGGPVFVAVYQPVQTLVVAIMASIALGEEFYLGGIIGAVLIIAGLYFVLYGKSEERKFAALEKAAIQSSAEHGIERAPVSRNSIKSSITTPLLHQSTDNV</sequence>
<accession>Q94AP3</accession>
<accession>Q0WMC8</accession>
<accession>Q9LQZ3</accession>
<reference key="1">
    <citation type="journal article" date="2000" name="Nature">
        <title>Sequence and analysis of chromosome 1 of the plant Arabidopsis thaliana.</title>
        <authorList>
            <person name="Theologis A."/>
            <person name="Ecker J.R."/>
            <person name="Palm C.J."/>
            <person name="Federspiel N.A."/>
            <person name="Kaul S."/>
            <person name="White O."/>
            <person name="Alonso J."/>
            <person name="Altafi H."/>
            <person name="Araujo R."/>
            <person name="Bowman C.L."/>
            <person name="Brooks S.Y."/>
            <person name="Buehler E."/>
            <person name="Chan A."/>
            <person name="Chao Q."/>
            <person name="Chen H."/>
            <person name="Cheuk R.F."/>
            <person name="Chin C.W."/>
            <person name="Chung M.K."/>
            <person name="Conn L."/>
            <person name="Conway A.B."/>
            <person name="Conway A.R."/>
            <person name="Creasy T.H."/>
            <person name="Dewar K."/>
            <person name="Dunn P."/>
            <person name="Etgu P."/>
            <person name="Feldblyum T.V."/>
            <person name="Feng J.-D."/>
            <person name="Fong B."/>
            <person name="Fujii C.Y."/>
            <person name="Gill J.E."/>
            <person name="Goldsmith A.D."/>
            <person name="Haas B."/>
            <person name="Hansen N.F."/>
            <person name="Hughes B."/>
            <person name="Huizar L."/>
            <person name="Hunter J.L."/>
            <person name="Jenkins J."/>
            <person name="Johnson-Hopson C."/>
            <person name="Khan S."/>
            <person name="Khaykin E."/>
            <person name="Kim C.J."/>
            <person name="Koo H.L."/>
            <person name="Kremenetskaia I."/>
            <person name="Kurtz D.B."/>
            <person name="Kwan A."/>
            <person name="Lam B."/>
            <person name="Langin-Hooper S."/>
            <person name="Lee A."/>
            <person name="Lee J.M."/>
            <person name="Lenz C.A."/>
            <person name="Li J.H."/>
            <person name="Li Y.-P."/>
            <person name="Lin X."/>
            <person name="Liu S.X."/>
            <person name="Liu Z.A."/>
            <person name="Luros J.S."/>
            <person name="Maiti R."/>
            <person name="Marziali A."/>
            <person name="Militscher J."/>
            <person name="Miranda M."/>
            <person name="Nguyen M."/>
            <person name="Nierman W.C."/>
            <person name="Osborne B.I."/>
            <person name="Pai G."/>
            <person name="Peterson J."/>
            <person name="Pham P.K."/>
            <person name="Rizzo M."/>
            <person name="Rooney T."/>
            <person name="Rowley D."/>
            <person name="Sakano H."/>
            <person name="Salzberg S.L."/>
            <person name="Schwartz J.R."/>
            <person name="Shinn P."/>
            <person name="Southwick A.M."/>
            <person name="Sun H."/>
            <person name="Tallon L.J."/>
            <person name="Tambunga G."/>
            <person name="Toriumi M.J."/>
            <person name="Town C.D."/>
            <person name="Utterback T."/>
            <person name="Van Aken S."/>
            <person name="Vaysberg M."/>
            <person name="Vysotskaia V.S."/>
            <person name="Walker M."/>
            <person name="Wu D."/>
            <person name="Yu G."/>
            <person name="Fraser C.M."/>
            <person name="Venter J.C."/>
            <person name="Davis R.W."/>
        </authorList>
    </citation>
    <scope>NUCLEOTIDE SEQUENCE [LARGE SCALE GENOMIC DNA]</scope>
    <source>
        <strain>cv. Columbia</strain>
    </source>
</reference>
<reference key="2">
    <citation type="journal article" date="2017" name="Plant J.">
        <title>Araport11: a complete reannotation of the Arabidopsis thaliana reference genome.</title>
        <authorList>
            <person name="Cheng C.Y."/>
            <person name="Krishnakumar V."/>
            <person name="Chan A.P."/>
            <person name="Thibaud-Nissen F."/>
            <person name="Schobel S."/>
            <person name="Town C.D."/>
        </authorList>
    </citation>
    <scope>GENOME REANNOTATION</scope>
    <source>
        <strain>cv. Columbia</strain>
    </source>
</reference>
<reference key="3">
    <citation type="journal article" date="2003" name="Science">
        <title>Empirical analysis of transcriptional activity in the Arabidopsis genome.</title>
        <authorList>
            <person name="Yamada K."/>
            <person name="Lim J."/>
            <person name="Dale J.M."/>
            <person name="Chen H."/>
            <person name="Shinn P."/>
            <person name="Palm C.J."/>
            <person name="Southwick A.M."/>
            <person name="Wu H.C."/>
            <person name="Kim C.J."/>
            <person name="Nguyen M."/>
            <person name="Pham P.K."/>
            <person name="Cheuk R.F."/>
            <person name="Karlin-Newmann G."/>
            <person name="Liu S.X."/>
            <person name="Lam B."/>
            <person name="Sakano H."/>
            <person name="Wu T."/>
            <person name="Yu G."/>
            <person name="Miranda M."/>
            <person name="Quach H.L."/>
            <person name="Tripp M."/>
            <person name="Chang C.H."/>
            <person name="Lee J.M."/>
            <person name="Toriumi M.J."/>
            <person name="Chan M.M."/>
            <person name="Tang C.C."/>
            <person name="Onodera C.S."/>
            <person name="Deng J.M."/>
            <person name="Akiyama K."/>
            <person name="Ansari Y."/>
            <person name="Arakawa T."/>
            <person name="Banh J."/>
            <person name="Banno F."/>
            <person name="Bowser L."/>
            <person name="Brooks S.Y."/>
            <person name="Carninci P."/>
            <person name="Chao Q."/>
            <person name="Choy N."/>
            <person name="Enju A."/>
            <person name="Goldsmith A.D."/>
            <person name="Gurjal M."/>
            <person name="Hansen N.F."/>
            <person name="Hayashizaki Y."/>
            <person name="Johnson-Hopson C."/>
            <person name="Hsuan V.W."/>
            <person name="Iida K."/>
            <person name="Karnes M."/>
            <person name="Khan S."/>
            <person name="Koesema E."/>
            <person name="Ishida J."/>
            <person name="Jiang P.X."/>
            <person name="Jones T."/>
            <person name="Kawai J."/>
            <person name="Kamiya A."/>
            <person name="Meyers C."/>
            <person name="Nakajima M."/>
            <person name="Narusaka M."/>
            <person name="Seki M."/>
            <person name="Sakurai T."/>
            <person name="Satou M."/>
            <person name="Tamse R."/>
            <person name="Vaysberg M."/>
            <person name="Wallender E.K."/>
            <person name="Wong C."/>
            <person name="Yamamura Y."/>
            <person name="Yuan S."/>
            <person name="Shinozaki K."/>
            <person name="Davis R.W."/>
            <person name="Theologis A."/>
            <person name="Ecker J.R."/>
        </authorList>
    </citation>
    <scope>NUCLEOTIDE SEQUENCE [LARGE SCALE MRNA]</scope>
    <source>
        <strain>cv. Columbia</strain>
    </source>
</reference>
<reference key="4">
    <citation type="submission" date="2006-07" db="EMBL/GenBank/DDBJ databases">
        <title>Large-scale analysis of RIKEN Arabidopsis full-length (RAFL) cDNAs.</title>
        <authorList>
            <person name="Totoki Y."/>
            <person name="Seki M."/>
            <person name="Ishida J."/>
            <person name="Nakajima M."/>
            <person name="Enju A."/>
            <person name="Kamiya A."/>
            <person name="Narusaka M."/>
            <person name="Shin-i T."/>
            <person name="Nakagawa M."/>
            <person name="Sakamoto N."/>
            <person name="Oishi K."/>
            <person name="Kohara Y."/>
            <person name="Kobayashi M."/>
            <person name="Toyoda A."/>
            <person name="Sakaki Y."/>
            <person name="Sakurai T."/>
            <person name="Iida K."/>
            <person name="Akiyama K."/>
            <person name="Satou M."/>
            <person name="Toyoda T."/>
            <person name="Konagaya A."/>
            <person name="Carninci P."/>
            <person name="Kawai J."/>
            <person name="Hayashizaki Y."/>
            <person name="Shinozaki K."/>
        </authorList>
    </citation>
    <scope>NUCLEOTIDE SEQUENCE [LARGE SCALE MRNA]</scope>
    <source>
        <strain>cv. Columbia</strain>
    </source>
</reference>
<reference key="5">
    <citation type="journal article" date="2007" name="Mol. Cell. Proteomics">
        <title>A proteomics dissection of Arabidopsis thaliana vacuoles isolated from cell culture.</title>
        <authorList>
            <person name="Jaquinod M."/>
            <person name="Villiers F."/>
            <person name="Kieffer-Jaquinod S."/>
            <person name="Hugouvieux V."/>
            <person name="Bruley C."/>
            <person name="Garin J."/>
            <person name="Bourguignon J."/>
        </authorList>
    </citation>
    <scope>IDENTIFICATION BY MASS SPECTROMETRY</scope>
    <scope>SUBCELLULAR LOCATION [LARGE SCALE ANALYSIS]</scope>
</reference>
<reference key="6">
    <citation type="journal article" date="2009" name="Plant Physiol.">
        <title>Large-scale Arabidopsis phosphoproteome profiling reveals novel chloroplast kinase substrates and phosphorylation networks.</title>
        <authorList>
            <person name="Reiland S."/>
            <person name="Messerli G."/>
            <person name="Baerenfaller K."/>
            <person name="Gerrits B."/>
            <person name="Endler A."/>
            <person name="Grossmann J."/>
            <person name="Gruissem W."/>
            <person name="Baginsky S."/>
        </authorList>
    </citation>
    <scope>PHOSPHORYLATION [LARGE SCALE ANALYSIS] AT SER-372</scope>
    <scope>IDENTIFICATION BY MASS SPECTROMETRY [LARGE SCALE ANALYSIS]</scope>
</reference>
<reference key="7">
    <citation type="journal article" date="2010" name="Plant J.">
        <title>Walls are thin 1 (WAT1), an Arabidopsis homolog of Medicago truncatula NODULIN21, is a tonoplast-localized protein required for secondary wall formation in fibers.</title>
        <authorList>
            <person name="Ranocha P."/>
            <person name="Denance N."/>
            <person name="Vanholme R."/>
            <person name="Freydier A."/>
            <person name="Martinez Y."/>
            <person name="Hoffmann L."/>
            <person name="Koehler L."/>
            <person name="Pouzet C."/>
            <person name="Renou J.-P."/>
            <person name="Sundberg B."/>
            <person name="Boerjan W."/>
            <person name="Goffner D."/>
        </authorList>
    </citation>
    <scope>FUNCTION</scope>
    <scope>DISRUPTION PHENOTYPE</scope>
    <scope>SUBCELLULAR LOCATION</scope>
    <scope>TISSUE SPECIFICITY</scope>
    <source>
        <strain>cv. Columbia</strain>
        <strain>cv. Wassilewskija</strain>
    </source>
</reference>
<reference key="8">
    <citation type="journal article" date="2010" name="Plant Signal. Behav.">
        <title>Light-regulated compensation of wat1 (walls are thin1) growth and secondary cell wall phenotypes is auxin-independent.</title>
        <authorList>
            <person name="Denance N."/>
            <person name="Ranocha P."/>
            <person name="Martinez Y."/>
            <person name="Sundberg B."/>
            <person name="Goffner D."/>
        </authorList>
    </citation>
    <scope>FUNCTION</scope>
    <scope>DISRUPTION PHENOTYPE</scope>
</reference>
<reference key="9">
    <citation type="journal article" date="2013" name="Plant J.">
        <title>Arabidopsis wat1 (walls are thin1)-mediated resistance to the bacterial vascular pathogen, Ralstonia solanacearum, is accompanied by cross-regulation of salicylic acid and tryptophan metabolism.</title>
        <authorList>
            <person name="Denance N."/>
            <person name="Ranocha P."/>
            <person name="Oria N."/>
            <person name="Barlet X."/>
            <person name="Riviere M.-P."/>
            <person name="Yadeta K.A."/>
            <person name="Hoffmann L."/>
            <person name="Perreau F."/>
            <person name="Clement G."/>
            <person name="Maia-Grondard A."/>
            <person name="van den Berg G.C.M."/>
            <person name="Savelli B."/>
            <person name="Fournier S."/>
            <person name="Aubert Y."/>
            <person name="Pelletier S."/>
            <person name="Thomma B.P.H.J."/>
            <person name="Molina A."/>
            <person name="Jouanin L."/>
            <person name="Marco Y."/>
            <person name="Goffner D."/>
        </authorList>
    </citation>
    <scope>FUNCTION</scope>
    <scope>DISRUPTION PHENOTYPE</scope>
</reference>
<comment type="function">
    <text evidence="3 4 5">Required for secondary wall formation in fibers, especially in short days conditions. Promotes indole metabolism and transport (e.g. tryptophan, neoglucobrassicin and auxin (indole-3-acetic acid)). May prevent salicylic-acid (SA) accumulation.</text>
</comment>
<comment type="subcellular location">
    <subcellularLocation>
        <location evidence="2 3">Vacuole membrane</location>
        <topology evidence="2 3">Multi-pass membrane protein</topology>
    </subcellularLocation>
    <text>Also detected in transvacuolar strands.</text>
</comment>
<comment type="tissue specificity">
    <text evidence="3">Mostly expressed in stems and hypocotyls, also present in seedlings, root, leaves, flowers and siliques. Ubiquitous, mostly expressed in vascular tissues and secondary wall-forming cells, including developing xylem vessels and fibers.</text>
</comment>
<comment type="disruption phenotype">
    <text evidence="3 4 5">In stems, defect in cell elongation resulting in dwarf and bushy plants with altered mechanical properties, as well as little to no secondary cell walls in fibers, including xylary and interfascicular fibers; these symptoms are partly reversed by continuous light conditions. At the flowering stage, red, dry and bent downwards stem apices. General repression of indole metabolism, including tryptophan, neoglucobrassicin and auxin (indole-3-acetic acid). Broad-spectrum resistance to vascular pathogens, including the bacteria Ralstonia solanacearum and Xanthomonas campestris pv. campestris, and the fungi Verticillium dahliae and Verticillium albo-atrum in a salicylic-acid- (SA-) dependent manner. SA accumulation in roots.</text>
</comment>
<comment type="similarity">
    <text evidence="6">Belongs to the drug/metabolite transporter (DMT) superfamily. Plant drug/metabolite exporter (P-DME) (TC 2.A.7.4) family.</text>
</comment>
<comment type="sequence caution" evidence="6">
    <conflict type="erroneous gene model prediction">
        <sequence resource="EMBL-CDS" id="AAF87121"/>
    </conflict>
</comment>
<name>WAT1_ARATH</name>
<feature type="chain" id="PRO_0000421308" description="Protein WALLS ARE THIN 1">
    <location>
        <begin position="1"/>
        <end position="389"/>
    </location>
</feature>
<feature type="transmembrane region" description="Helical" evidence="1">
    <location>
        <begin position="18"/>
        <end position="38"/>
    </location>
</feature>
<feature type="transmembrane region" description="Helical" evidence="1">
    <location>
        <begin position="49"/>
        <end position="69"/>
    </location>
</feature>
<feature type="transmembrane region" description="Helical" evidence="1">
    <location>
        <begin position="76"/>
        <end position="96"/>
    </location>
</feature>
<feature type="transmembrane region" description="Helical" evidence="1">
    <location>
        <begin position="111"/>
        <end position="131"/>
    </location>
</feature>
<feature type="transmembrane region" description="Helical" evidence="1">
    <location>
        <begin position="143"/>
        <end position="163"/>
    </location>
</feature>
<feature type="transmembrane region" description="Helical" evidence="1">
    <location>
        <begin position="198"/>
        <end position="218"/>
    </location>
</feature>
<feature type="transmembrane region" description="Helical" evidence="1">
    <location>
        <begin position="230"/>
        <end position="250"/>
    </location>
</feature>
<feature type="transmembrane region" description="Helical" evidence="1">
    <location>
        <begin position="266"/>
        <end position="286"/>
    </location>
</feature>
<feature type="transmembrane region" description="Helical" evidence="1">
    <location>
        <begin position="294"/>
        <end position="314"/>
    </location>
</feature>
<feature type="transmembrane region" description="Helical" evidence="1">
    <location>
        <begin position="319"/>
        <end position="339"/>
    </location>
</feature>
<feature type="domain" description="EamA 1">
    <location>
        <begin position="32"/>
        <end position="161"/>
    </location>
</feature>
<feature type="domain" description="EamA 2">
    <location>
        <begin position="210"/>
        <end position="339"/>
    </location>
</feature>
<feature type="modified residue" description="Phosphoserine" evidence="7">
    <location>
        <position position="372"/>
    </location>
</feature>
<proteinExistence type="evidence at protein level"/>